<proteinExistence type="evidence at transcript level"/>
<reference key="1">
    <citation type="journal article" date="1999" name="FEBS Lett.">
        <title>Spinach hexokinase I is located in the outer envelope membrane of plastids.</title>
        <authorList>
            <person name="Wiese A."/>
            <person name="Groener F."/>
            <person name="Sonnewald U."/>
            <person name="Deppner H."/>
            <person name="Lerchl J."/>
            <person name="Fluegge U.I."/>
            <person name="Weber A."/>
        </authorList>
    </citation>
    <scope>NUCLEOTIDE SEQUENCE [MRNA]</scope>
</reference>
<name>HXK1_TOBAC</name>
<feature type="chain" id="PRO_0000197618" description="Hexokinase-1">
    <location>
        <begin position="1"/>
        <end position="497"/>
    </location>
</feature>
<feature type="transmembrane region" description="Helical" evidence="3">
    <location>
        <begin position="4"/>
        <end position="24"/>
    </location>
</feature>
<feature type="domain" description="Hexokinase" evidence="4">
    <location>
        <begin position="35"/>
        <end position="487"/>
    </location>
</feature>
<feature type="region of interest" description="Hexokinase small subdomain" evidence="4">
    <location>
        <begin position="90"/>
        <end position="228"/>
    </location>
</feature>
<feature type="region of interest" description="Hexokinase large subdomain" evidence="4">
    <location>
        <begin position="229"/>
        <end position="476"/>
    </location>
</feature>
<feature type="binding site" evidence="2">
    <location>
        <position position="104"/>
    </location>
    <ligand>
        <name>ADP</name>
        <dbReference type="ChEBI" id="CHEBI:456216"/>
    </ligand>
</feature>
<feature type="binding site" evidence="2">
    <location>
        <position position="105"/>
    </location>
    <ligand>
        <name>ADP</name>
        <dbReference type="ChEBI" id="CHEBI:456216"/>
    </ligand>
</feature>
<feature type="binding site" evidence="2">
    <location>
        <position position="106"/>
    </location>
    <ligand>
        <name>ADP</name>
        <dbReference type="ChEBI" id="CHEBI:456216"/>
    </ligand>
</feature>
<feature type="binding site" evidence="2">
    <location>
        <position position="194"/>
    </location>
    <ligand>
        <name>D-glucose</name>
        <dbReference type="ChEBI" id="CHEBI:4167"/>
    </ligand>
</feature>
<feature type="binding site" evidence="2">
    <location>
        <position position="195"/>
    </location>
    <ligand>
        <name>D-glucose</name>
        <dbReference type="ChEBI" id="CHEBI:4167"/>
    </ligand>
</feature>
<feature type="binding site" evidence="2">
    <location>
        <position position="229"/>
    </location>
    <ligand>
        <name>D-glucose</name>
        <dbReference type="ChEBI" id="CHEBI:4167"/>
    </ligand>
</feature>
<feature type="binding site" evidence="2">
    <location>
        <position position="230"/>
    </location>
    <ligand>
        <name>D-glucose</name>
        <dbReference type="ChEBI" id="CHEBI:4167"/>
    </ligand>
</feature>
<feature type="binding site" evidence="2">
    <location>
        <position position="253"/>
    </location>
    <ligand>
        <name>ADP</name>
        <dbReference type="ChEBI" id="CHEBI:456216"/>
    </ligand>
</feature>
<feature type="binding site" evidence="2">
    <location>
        <position position="256"/>
    </location>
    <ligand>
        <name>D-glucose</name>
        <dbReference type="ChEBI" id="CHEBI:4167"/>
    </ligand>
</feature>
<feature type="binding site" evidence="2">
    <location>
        <position position="284"/>
    </location>
    <ligand>
        <name>D-glucose</name>
        <dbReference type="ChEBI" id="CHEBI:4167"/>
    </ligand>
</feature>
<feature type="binding site" evidence="2">
    <location>
        <position position="315"/>
    </location>
    <ligand>
        <name>D-glucose</name>
        <dbReference type="ChEBI" id="CHEBI:4167"/>
    </ligand>
</feature>
<feature type="binding site" evidence="2">
    <location>
        <position position="441"/>
    </location>
    <ligand>
        <name>ADP</name>
        <dbReference type="ChEBI" id="CHEBI:456216"/>
    </ligand>
</feature>
<comment type="function">
    <text evidence="1">Fructose and glucose phosphorylating enzyme.</text>
</comment>
<comment type="catalytic activity">
    <reaction evidence="1">
        <text>a D-hexose + ATP = a D-hexose 6-phosphate + ADP + H(+)</text>
        <dbReference type="Rhea" id="RHEA:22740"/>
        <dbReference type="ChEBI" id="CHEBI:4194"/>
        <dbReference type="ChEBI" id="CHEBI:15378"/>
        <dbReference type="ChEBI" id="CHEBI:30616"/>
        <dbReference type="ChEBI" id="CHEBI:229467"/>
        <dbReference type="ChEBI" id="CHEBI:456216"/>
        <dbReference type="EC" id="2.7.1.1"/>
    </reaction>
    <physiologicalReaction direction="left-to-right" evidence="1">
        <dbReference type="Rhea" id="RHEA:22741"/>
    </physiologicalReaction>
</comment>
<comment type="catalytic activity">
    <reaction evidence="1">
        <text>D-fructose + ATP = D-fructose 6-phosphate + ADP + H(+)</text>
        <dbReference type="Rhea" id="RHEA:16125"/>
        <dbReference type="ChEBI" id="CHEBI:15378"/>
        <dbReference type="ChEBI" id="CHEBI:30616"/>
        <dbReference type="ChEBI" id="CHEBI:37721"/>
        <dbReference type="ChEBI" id="CHEBI:61527"/>
        <dbReference type="ChEBI" id="CHEBI:456216"/>
        <dbReference type="EC" id="2.7.1.1"/>
    </reaction>
    <physiologicalReaction direction="left-to-right" evidence="1">
        <dbReference type="Rhea" id="RHEA:16126"/>
    </physiologicalReaction>
</comment>
<comment type="catalytic activity">
    <reaction evidence="1">
        <text>D-glucose + ATP = D-glucose 6-phosphate + ADP + H(+)</text>
        <dbReference type="Rhea" id="RHEA:17825"/>
        <dbReference type="ChEBI" id="CHEBI:4167"/>
        <dbReference type="ChEBI" id="CHEBI:15378"/>
        <dbReference type="ChEBI" id="CHEBI:30616"/>
        <dbReference type="ChEBI" id="CHEBI:61548"/>
        <dbReference type="ChEBI" id="CHEBI:456216"/>
        <dbReference type="EC" id="2.7.1.1"/>
    </reaction>
    <physiologicalReaction direction="left-to-right" evidence="1">
        <dbReference type="Rhea" id="RHEA:17826"/>
    </physiologicalReaction>
</comment>
<comment type="pathway">
    <text evidence="1">Carbohydrate metabolism; hexose metabolism.</text>
</comment>
<comment type="pathway">
    <text evidence="1">Carbohydrate degradation; glycolysis; D-glyceraldehyde 3-phosphate and glycerone phosphate from D-glucose: step 1/4.</text>
</comment>
<comment type="subcellular location">
    <subcellularLocation>
        <location evidence="5">Plastid</location>
        <location evidence="5">Chloroplast outer membrane</location>
        <topology evidence="5">Single-pass membrane protein</topology>
    </subcellularLocation>
</comment>
<comment type="similarity">
    <text evidence="4 5">Belongs to the hexokinase family.</text>
</comment>
<keyword id="KW-0067">ATP-binding</keyword>
<keyword id="KW-0150">Chloroplast</keyword>
<keyword id="KW-0324">Glycolysis</keyword>
<keyword id="KW-0418">Kinase</keyword>
<keyword id="KW-0472">Membrane</keyword>
<keyword id="KW-0547">Nucleotide-binding</keyword>
<keyword id="KW-0934">Plastid</keyword>
<keyword id="KW-1002">Plastid outer membrane</keyword>
<keyword id="KW-1185">Reference proteome</keyword>
<keyword id="KW-0808">Transferase</keyword>
<keyword id="KW-0812">Transmembrane</keyword>
<keyword id="KW-1133">Transmembrane helix</keyword>
<evidence type="ECO:0000250" key="1">
    <source>
        <dbReference type="UniProtKB" id="Q6Q8A5"/>
    </source>
</evidence>
<evidence type="ECO:0000250" key="2">
    <source>
        <dbReference type="UniProtKB" id="Q8LQ68"/>
    </source>
</evidence>
<evidence type="ECO:0000255" key="3"/>
<evidence type="ECO:0000255" key="4">
    <source>
        <dbReference type="PROSITE-ProRule" id="PRU01084"/>
    </source>
</evidence>
<evidence type="ECO:0000305" key="5"/>
<gene>
    <name type="primary">HXK1</name>
</gene>
<organism>
    <name type="scientific">Nicotiana tabacum</name>
    <name type="common">Common tobacco</name>
    <dbReference type="NCBI Taxonomy" id="4097"/>
    <lineage>
        <taxon>Eukaryota</taxon>
        <taxon>Viridiplantae</taxon>
        <taxon>Streptophyta</taxon>
        <taxon>Embryophyta</taxon>
        <taxon>Tracheophyta</taxon>
        <taxon>Spermatophyta</taxon>
        <taxon>Magnoliopsida</taxon>
        <taxon>eudicotyledons</taxon>
        <taxon>Gunneridae</taxon>
        <taxon>Pentapetalae</taxon>
        <taxon>asterids</taxon>
        <taxon>lamiids</taxon>
        <taxon>Solanales</taxon>
        <taxon>Solanaceae</taxon>
        <taxon>Nicotianoideae</taxon>
        <taxon>Nicotianeae</taxon>
        <taxon>Nicotiana</taxon>
    </lineage>
</organism>
<dbReference type="EC" id="2.7.1.1" evidence="1"/>
<dbReference type="EMBL" id="AF118133">
    <property type="protein sequence ID" value="AAF18585.1"/>
    <property type="molecule type" value="mRNA"/>
</dbReference>
<dbReference type="RefSeq" id="NP_001312563.1">
    <property type="nucleotide sequence ID" value="NM_001325634.1"/>
</dbReference>
<dbReference type="SMR" id="Q9SEK2"/>
<dbReference type="STRING" id="4097.Q9SEK2"/>
<dbReference type="PaxDb" id="4097-Q9SEK2"/>
<dbReference type="ProMEX" id="Q9SEK2"/>
<dbReference type="GeneID" id="107797523"/>
<dbReference type="KEGG" id="nta:107797523"/>
<dbReference type="OrthoDB" id="419537at2759"/>
<dbReference type="UniPathway" id="UPA00109">
    <property type="reaction ID" value="UER00180"/>
</dbReference>
<dbReference type="UniPathway" id="UPA00242"/>
<dbReference type="Proteomes" id="UP000084051">
    <property type="component" value="Unplaced"/>
</dbReference>
<dbReference type="GO" id="GO:0009707">
    <property type="term" value="C:chloroplast outer membrane"/>
    <property type="evidence" value="ECO:0007669"/>
    <property type="project" value="UniProtKB-SubCell"/>
</dbReference>
<dbReference type="GO" id="GO:0005829">
    <property type="term" value="C:cytosol"/>
    <property type="evidence" value="ECO:0000318"/>
    <property type="project" value="GO_Central"/>
</dbReference>
<dbReference type="GO" id="GO:0005739">
    <property type="term" value="C:mitochondrion"/>
    <property type="evidence" value="ECO:0000318"/>
    <property type="project" value="GO_Central"/>
</dbReference>
<dbReference type="GO" id="GO:0005524">
    <property type="term" value="F:ATP binding"/>
    <property type="evidence" value="ECO:0007669"/>
    <property type="project" value="UniProtKB-KW"/>
</dbReference>
<dbReference type="GO" id="GO:0005536">
    <property type="term" value="F:D-glucose binding"/>
    <property type="evidence" value="ECO:0007669"/>
    <property type="project" value="InterPro"/>
</dbReference>
<dbReference type="GO" id="GO:0008865">
    <property type="term" value="F:fructokinase activity"/>
    <property type="evidence" value="ECO:0000318"/>
    <property type="project" value="GO_Central"/>
</dbReference>
<dbReference type="GO" id="GO:0004340">
    <property type="term" value="F:glucokinase activity"/>
    <property type="evidence" value="ECO:0000318"/>
    <property type="project" value="GO_Central"/>
</dbReference>
<dbReference type="GO" id="GO:0051156">
    <property type="term" value="P:glucose 6-phosphate metabolic process"/>
    <property type="evidence" value="ECO:0000318"/>
    <property type="project" value="GO_Central"/>
</dbReference>
<dbReference type="GO" id="GO:0006006">
    <property type="term" value="P:glucose metabolic process"/>
    <property type="evidence" value="ECO:0000318"/>
    <property type="project" value="GO_Central"/>
</dbReference>
<dbReference type="GO" id="GO:0006096">
    <property type="term" value="P:glycolytic process"/>
    <property type="evidence" value="ECO:0000318"/>
    <property type="project" value="GO_Central"/>
</dbReference>
<dbReference type="GO" id="GO:0001678">
    <property type="term" value="P:intracellular glucose homeostasis"/>
    <property type="evidence" value="ECO:0000318"/>
    <property type="project" value="GO_Central"/>
</dbReference>
<dbReference type="CDD" id="cd24020">
    <property type="entry name" value="ASKHA_NBD_HK_plant"/>
    <property type="match status" value="1"/>
</dbReference>
<dbReference type="FunFam" id="3.30.420.40:FF:000034">
    <property type="entry name" value="Phosphotransferase"/>
    <property type="match status" value="1"/>
</dbReference>
<dbReference type="FunFam" id="3.40.367.20:FF:000003">
    <property type="entry name" value="Phosphotransferase"/>
    <property type="match status" value="1"/>
</dbReference>
<dbReference type="Gene3D" id="3.30.420.40">
    <property type="match status" value="1"/>
</dbReference>
<dbReference type="Gene3D" id="3.40.367.20">
    <property type="match status" value="1"/>
</dbReference>
<dbReference type="InterPro" id="IPR043129">
    <property type="entry name" value="ATPase_NBD"/>
</dbReference>
<dbReference type="InterPro" id="IPR001312">
    <property type="entry name" value="Hexokinase"/>
</dbReference>
<dbReference type="InterPro" id="IPR019807">
    <property type="entry name" value="Hexokinase_BS"/>
</dbReference>
<dbReference type="InterPro" id="IPR022673">
    <property type="entry name" value="Hexokinase_C"/>
</dbReference>
<dbReference type="InterPro" id="IPR022672">
    <property type="entry name" value="Hexokinase_N"/>
</dbReference>
<dbReference type="PANTHER" id="PTHR19443">
    <property type="entry name" value="HEXOKINASE"/>
    <property type="match status" value="1"/>
</dbReference>
<dbReference type="PANTHER" id="PTHR19443:SF85">
    <property type="entry name" value="HEXOKINASE-1"/>
    <property type="match status" value="1"/>
</dbReference>
<dbReference type="Pfam" id="PF00349">
    <property type="entry name" value="Hexokinase_1"/>
    <property type="match status" value="1"/>
</dbReference>
<dbReference type="Pfam" id="PF03727">
    <property type="entry name" value="Hexokinase_2"/>
    <property type="match status" value="1"/>
</dbReference>
<dbReference type="PRINTS" id="PR00475">
    <property type="entry name" value="HEXOKINASE"/>
</dbReference>
<dbReference type="SUPFAM" id="SSF53067">
    <property type="entry name" value="Actin-like ATPase domain"/>
    <property type="match status" value="2"/>
</dbReference>
<dbReference type="PROSITE" id="PS00378">
    <property type="entry name" value="HEXOKINASE_1"/>
    <property type="match status" value="1"/>
</dbReference>
<dbReference type="PROSITE" id="PS51748">
    <property type="entry name" value="HEXOKINASE_2"/>
    <property type="match status" value="1"/>
</dbReference>
<accession>Q9SEK2</accession>
<protein>
    <recommendedName>
        <fullName>Hexokinase-1</fullName>
        <ecNumber evidence="1">2.7.1.1</ecNumber>
    </recommendedName>
    <alternativeName>
        <fullName>NtHxK1</fullName>
    </alternativeName>
</protein>
<sequence>MKKATVGAAVIGAATVCAVAALIVNHRMRKSSKWARAMAILREFEEKCGTPDAKLKQVADAMTVEMHAGLASEGGSKLKMLITYVDNLPTGDEAGVFYALDLGGTNFRVLRVQLGGKDGGIVHQEFAEASIPPNLMVGTSEALFDYIAAELAKFVNEEGEKFQQPPGKQRELGFTFSFPVMQTSINSGTIMRWTKGFSIDDAVGQDVVGELAKAMKRKGVDMRVSALVNDTVGTLAGGKYTHNDVAVAVILGTGTNAAYVERVQAIPKWHGPVPKSGEMVINMEWGNFRSSHLPLTQYDHALDTNSLNPGDQIFEKMTSGMYLGEILRRVLLRVAEEAGIFGDEVPPKLKSPFVLRTPDMSAMHHDASSDLRVVGDKLKDILEISNTSLKTRRLVIELCNIVATRGARLAAAGVLGILKKMGRDTPRQGGLEKTVVAMDGGLYEHYTEYRMCLENTLKELLGDELATSIVFEHSNDGSGIGAALLAASNSMYLEDKS</sequence>